<evidence type="ECO:0000250" key="1">
    <source>
        <dbReference type="UniProtKB" id="A1Z1Q3"/>
    </source>
</evidence>
<evidence type="ECO:0000250" key="2">
    <source>
        <dbReference type="UniProtKB" id="Q922B1"/>
    </source>
</evidence>
<evidence type="ECO:0000255" key="3">
    <source>
        <dbReference type="PROSITE-ProRule" id="PRU00490"/>
    </source>
</evidence>
<evidence type="ECO:0000269" key="4">
    <source>
    </source>
</evidence>
<evidence type="ECO:0000269" key="5">
    <source>
    </source>
</evidence>
<evidence type="ECO:0000269" key="6">
    <source>
    </source>
</evidence>
<evidence type="ECO:0000269" key="7">
    <source>
    </source>
</evidence>
<evidence type="ECO:0000269" key="8">
    <source>
    </source>
</evidence>
<evidence type="ECO:0000269" key="9">
    <source>
    </source>
</evidence>
<evidence type="ECO:0000269" key="10">
    <source>
    </source>
</evidence>
<evidence type="ECO:0000269" key="11">
    <source>
    </source>
</evidence>
<evidence type="ECO:0000269" key="12">
    <source>
    </source>
</evidence>
<evidence type="ECO:0000269" key="13">
    <source>
    </source>
</evidence>
<evidence type="ECO:0000303" key="14">
    <source>
    </source>
</evidence>
<evidence type="ECO:0000305" key="15"/>
<evidence type="ECO:0000305" key="16">
    <source>
    </source>
</evidence>
<evidence type="ECO:0000312" key="17">
    <source>
        <dbReference type="HGNC" id="HGNC:29598"/>
    </source>
</evidence>
<evidence type="ECO:0007744" key="18">
    <source>
    </source>
</evidence>
<evidence type="ECO:0007829" key="19">
    <source>
        <dbReference type="PDB" id="2X47"/>
    </source>
</evidence>
<reference key="1">
    <citation type="journal article" date="2001" name="Zhongguo Shi Yan Xue Ye Xue Za Zhi">
        <title>The application of RACE technique to clone the full-length cDNA of a novel leukemia associated gene LRP16.</title>
        <authorList>
            <person name="Han W.-D."/>
            <person name="Yu L."/>
            <person name="Lou F.D."/>
            <person name="Wang Q.S."/>
            <person name="Zhao Y."/>
            <person name="Shi Z.J."/>
            <person name="Jin H.J."/>
        </authorList>
    </citation>
    <scope>NUCLEOTIDE SEQUENCE [MRNA]</scope>
    <source>
        <tissue>Lymphocyte</tissue>
    </source>
</reference>
<reference key="2">
    <citation type="journal article" date="2004" name="Genome Res.">
        <title>The status, quality, and expansion of the NIH full-length cDNA project: the Mammalian Gene Collection (MGC).</title>
        <authorList>
            <consortium name="The MGC Project Team"/>
        </authorList>
    </citation>
    <scope>NUCLEOTIDE SEQUENCE [LARGE SCALE MRNA]</scope>
    <source>
        <tissue>Brain</tissue>
        <tissue>Eye</tissue>
    </source>
</reference>
<reference key="3">
    <citation type="journal article" date="2003" name="Endocr. Relat. Cancer">
        <title>Up-regulation of LRP16 mRNA by 17beta-estradiol through activation of estrogen receptor alpha (ERalpha), but not ERbeta, and promotion of human breast cancer MCF-7 cell proliferation: a preliminary report.</title>
        <authorList>
            <person name="Han W.-D."/>
            <person name="Mu Y.-M."/>
            <person name="Lu X.-C."/>
            <person name="Xu Z.-M."/>
            <person name="Li X.-J."/>
            <person name="Yu L."/>
            <person name="Song H.-J."/>
            <person name="Li M."/>
            <person name="Lu J.-M."/>
            <person name="Zhao Y.-L."/>
            <person name="Pan C.-Y."/>
        </authorList>
    </citation>
    <scope>INDUCTION</scope>
</reference>
<reference key="4">
    <citation type="journal article" date="2007" name="Cell Res.">
        <title>Induction of the LRP16 gene by estrogen promotes the invasive growth of Ishikawa human endometrial cancer cells through the downregulation of E-cadherin.</title>
        <authorList>
            <person name="Meng Y.G."/>
            <person name="Han W.-D."/>
            <person name="Zhao Y.-L."/>
            <person name="Huang K."/>
            <person name="Si Y.-L."/>
            <person name="Wu Z.-Q."/>
            <person name="Mu Y.-M."/>
        </authorList>
    </citation>
    <scope>INDUCTION</scope>
    <scope>FUNCTION</scope>
</reference>
<reference key="5">
    <citation type="journal article" date="2007" name="Endocr. Relat. Cancer">
        <title>Estrogenically regulated LRP16 interacts with estrogen receptor alpha and enhances the receptor's transcriptional activity.</title>
        <authorList>
            <person name="Han W.-D."/>
            <person name="Zhao Y.-L."/>
            <person name="Meng Y.G."/>
            <person name="Zang L."/>
            <person name="Wu Z.-Q."/>
            <person name="Li Q."/>
            <person name="Si Y.-L."/>
            <person name="Huang K."/>
            <person name="Ba J.-M."/>
            <person name="Morinaga H."/>
            <person name="Nomura M."/>
            <person name="Mu Y.-M."/>
        </authorList>
    </citation>
    <scope>INTERACTION WITH ESR1</scope>
    <scope>FUNCTION</scope>
</reference>
<reference key="6">
    <citation type="journal article" date="2007" name="Eur. J. Haematol.">
        <title>LRP16 is fused to RUNX1 in monocytic leukemia cell line with t(11;21)(q13;q22).</title>
        <authorList>
            <person name="Imagama S."/>
            <person name="Abe A."/>
            <person name="Suzuki M."/>
            <person name="Hayakawa F."/>
            <person name="Katsumi A."/>
            <person name="Emi N."/>
            <person name="Kiyoi H."/>
            <person name="Naoe T."/>
        </authorList>
    </citation>
    <scope>CHROMOSOMAL TRANSLOCATION WITH RUNX1</scope>
</reference>
<reference key="7">
    <citation type="journal article" date="2009" name="Endocr. Relat. Cancer">
        <title>The single-macro domain protein LRP16 is an essential cofactor of androgen receptor.</title>
        <authorList>
            <person name="Yang J."/>
            <person name="Zhao Y.-L."/>
            <person name="Wu Z.-Q."/>
            <person name="Si Y.-L."/>
            <person name="Meng Y.G."/>
            <person name="Fu X.B."/>
            <person name="Mu Y.-M."/>
            <person name="Han W.-D."/>
        </authorList>
    </citation>
    <scope>FUNCTION</scope>
    <scope>INTERACTION WITH ANDROGENE RECEPTOR</scope>
    <scope>INDUCTION BY ANDROGEN</scope>
</reference>
<reference key="8">
    <citation type="journal article" date="2009" name="J. Endocrinol.">
        <title>Differential induction of LRP16 by liganded and unliganded estrogen receptor alpha in SKOV3 ovarian carcinoma cells.</title>
        <authorList>
            <person name="Tian L."/>
            <person name="Wu Z."/>
            <person name="Zhao Y."/>
            <person name="Meng Y."/>
            <person name="Si Y."/>
            <person name="Fu X."/>
            <person name="Mu Y."/>
            <person name="Han W."/>
        </authorList>
    </citation>
    <scope>INDUCTION</scope>
    <scope>FUNCTION</scope>
</reference>
<reference key="9">
    <citation type="journal article" date="2011" name="BMC Syst. Biol.">
        <title>Initial characterization of the human central proteome.</title>
        <authorList>
            <person name="Burkard T.R."/>
            <person name="Planyavsky M."/>
            <person name="Kaupe I."/>
            <person name="Breitwieser F.P."/>
            <person name="Buerckstuemmer T."/>
            <person name="Bennett K.L."/>
            <person name="Superti-Furga G."/>
            <person name="Colinge J."/>
        </authorList>
    </citation>
    <scope>IDENTIFICATION BY MASS SPECTROMETRY [LARGE SCALE ANALYSIS]</scope>
</reference>
<reference key="10">
    <citation type="journal article" date="2013" name="Nat. Struct. Mol. Biol.">
        <title>Macrodomain-containing proteins are new mono-ADP-ribosylhydrolases.</title>
        <authorList>
            <person name="Rosenthal F."/>
            <person name="Feijs K.L."/>
            <person name="Frugier E."/>
            <person name="Bonalli M."/>
            <person name="Forst A.H."/>
            <person name="Imhof R."/>
            <person name="Winkler H.C."/>
            <person name="Fischer D."/>
            <person name="Caflisch A."/>
            <person name="Hassa P.O."/>
            <person name="Luescher B."/>
            <person name="Hottiger M.O."/>
        </authorList>
    </citation>
    <scope>FUNCTION</scope>
    <scope>CATALYTIC ACTIVITY</scope>
    <scope>MUTAGENESIS OF ASP-184 AND HIS-188</scope>
</reference>
<reference key="11">
    <citation type="journal article" date="2013" name="Nat. Struct. Mol. Biol.">
        <title>A family of macrodomain proteins reverses cellular mono-ADP-ribosylation.</title>
        <authorList>
            <person name="Jankevicius G."/>
            <person name="Hassler M."/>
            <person name="Golia B."/>
            <person name="Rybin V."/>
            <person name="Zacharias M."/>
            <person name="Timinszky G."/>
            <person name="Ladurner A.G."/>
        </authorList>
    </citation>
    <scope>FUNCTION</scope>
    <scope>CATALYTIC ACTIVITY</scope>
    <scope>SUBCELLULAR LOCATION</scope>
    <scope>MUTAGENESIS OF ASN-174; ASP-184 AND GLY-270</scope>
</reference>
<reference key="12">
    <citation type="journal article" date="2015" name="Proteomics">
        <title>N-terminome analysis of the human mitochondrial proteome.</title>
        <authorList>
            <person name="Vaca Jacome A.S."/>
            <person name="Rabilloud T."/>
            <person name="Schaeffer-Reiss C."/>
            <person name="Rompais M."/>
            <person name="Ayoub D."/>
            <person name="Lane L."/>
            <person name="Bairoch A."/>
            <person name="Van Dorsselaer A."/>
            <person name="Carapito C."/>
        </authorList>
    </citation>
    <scope>IDENTIFICATION BY MASS SPECTROMETRY [LARGE SCALE ANALYSIS]</scope>
</reference>
<reference key="13">
    <citation type="journal article" date="2017" name="Nat. Struct. Mol. Biol.">
        <title>Site-specific mapping of the human SUMO proteome reveals co-modification with phosphorylation.</title>
        <authorList>
            <person name="Hendriks I.A."/>
            <person name="Lyon D."/>
            <person name="Young C."/>
            <person name="Jensen L.J."/>
            <person name="Vertegaal A.C."/>
            <person name="Nielsen M.L."/>
        </authorList>
    </citation>
    <scope>SUMOYLATION [LARGE SCALE ANALYSIS] AT LYS-138</scope>
    <scope>IDENTIFICATION BY MASS SPECTROMETRY [LARGE SCALE ANALYSIS]</scope>
</reference>
<reference key="14">
    <citation type="journal article" date="2019" name="ACS Chem. Biol.">
        <title>The ARH and Macrodomain Families of alpha-ADP-ribose-acceptor Hydrolases Catalyze alpha-NAD+ Hydrolysis.</title>
        <authorList>
            <person name="Stevens L.A."/>
            <person name="Kato J."/>
            <person name="Kasamatsu A."/>
            <person name="Oda H."/>
            <person name="Lee D.Y."/>
            <person name="Moss J."/>
        </authorList>
    </citation>
    <scope>CATALYTIC ACTIVITY</scope>
</reference>
<reference key="15">
    <citation type="journal article" date="2011" name="J. Biol. Chem.">
        <title>Identification of macrodomain proteins as novel O-acetyl-ADP-ribose deacetylases.</title>
        <authorList>
            <person name="Chen D."/>
            <person name="Vollmar M."/>
            <person name="Rossi M.N."/>
            <person name="Phillips C."/>
            <person name="Kraehenbuehl R."/>
            <person name="Slade D."/>
            <person name="Mehrotra P.V."/>
            <person name="von Delft F."/>
            <person name="Crosthwaite S.K."/>
            <person name="Gileadi O."/>
            <person name="Denu J.M."/>
            <person name="Ahel I."/>
        </authorList>
    </citation>
    <scope>X-RAY CRYSTALLOGRAPHY (1.7 ANGSTROMS) OF 91-325</scope>
    <scope>FUNCTION</scope>
    <scope>CATALYTIC ACTIVITY</scope>
    <scope>MUTAGENESIS OF ASP-160; ASP-167; ASN-171; ASN-174; ASP-184; HIS-188; SER-268 AND GLY-270</scope>
    <scope>BIOPHYSICOCHEMICAL PROPERTIES</scope>
    <scope>ACTIVITY REGULATION</scope>
</reference>
<comment type="function">
    <text evidence="6 7 8 9 10 11 12">Removes ADP-ribose from aspartate and glutamate residues in proteins bearing a single ADP-ribose moiety (PubMed:23474712, PubMed:23474714). Inactive towards proteins bearing poly-ADP-ribose (PubMed:23474712, PubMed:23474714). Deacetylates O-acetyl-ADP ribose, a signaling molecule generated by the deacetylation of acetylated lysine residues in histones and other proteins (PubMed:21257746). Plays a role in estrogen signaling (PubMed:17893710, PubMed:17914104, PubMed:19403568). Binds to androgen receptor (AR) and amplifies the transactivation function of AR in response to androgen (PubMed:19022849). May play an important role in carcinogenesis and/or progression of hormone-dependent cancers by feed-forward mechanism that activates ESR1 transactivation (PubMed:17893710, PubMed:17914104). Could be an ESR1 coactivator, providing a positive feedback regulatory loop for ESR1 signal transduction (PubMed:17914104). Could be involved in invasive growth by down-regulating CDH1 in endometrial cancer cells (PubMed:17893710). Enhances ESR1-mediated transcription activity (PubMed:17914104).</text>
</comment>
<comment type="catalytic activity">
    <reaction evidence="16">
        <text>3''-O-acetyl-ADP-D-ribose + H2O = ADP-D-ribose + acetate + H(+)</text>
        <dbReference type="Rhea" id="RHEA:59244"/>
        <dbReference type="ChEBI" id="CHEBI:15377"/>
        <dbReference type="ChEBI" id="CHEBI:15378"/>
        <dbReference type="ChEBI" id="CHEBI:30089"/>
        <dbReference type="ChEBI" id="CHEBI:57967"/>
        <dbReference type="ChEBI" id="CHEBI:142723"/>
        <dbReference type="EC" id="3.1.1.106"/>
    </reaction>
    <physiologicalReaction direction="left-to-right" evidence="16">
        <dbReference type="Rhea" id="RHEA:59245"/>
    </physiologicalReaction>
</comment>
<comment type="catalytic activity">
    <reaction evidence="16">
        <text>2''-O-acetyl-ADP-D-ribose + H2O = ADP-D-ribose + acetate + H(+)</text>
        <dbReference type="Rhea" id="RHEA:57060"/>
        <dbReference type="ChEBI" id="CHEBI:15377"/>
        <dbReference type="ChEBI" id="CHEBI:15378"/>
        <dbReference type="ChEBI" id="CHEBI:30089"/>
        <dbReference type="ChEBI" id="CHEBI:57967"/>
        <dbReference type="ChEBI" id="CHEBI:83767"/>
        <dbReference type="EC" id="3.1.1.106"/>
    </reaction>
    <physiologicalReaction direction="left-to-right" evidence="16">
        <dbReference type="Rhea" id="RHEA:57061"/>
    </physiologicalReaction>
</comment>
<comment type="catalytic activity">
    <reaction evidence="12">
        <text>4-O-(ADP-D-ribosyl)-L-aspartyl-[protein] + H2O = L-aspartyl-[protein] + ADP-D-ribose + H(+)</text>
        <dbReference type="Rhea" id="RHEA:54428"/>
        <dbReference type="Rhea" id="RHEA-COMP:9867"/>
        <dbReference type="Rhea" id="RHEA-COMP:13832"/>
        <dbReference type="ChEBI" id="CHEBI:15377"/>
        <dbReference type="ChEBI" id="CHEBI:15378"/>
        <dbReference type="ChEBI" id="CHEBI:29961"/>
        <dbReference type="ChEBI" id="CHEBI:57967"/>
        <dbReference type="ChEBI" id="CHEBI:138102"/>
    </reaction>
    <physiologicalReaction direction="left-to-right" evidence="12">
        <dbReference type="Rhea" id="RHEA:54429"/>
    </physiologicalReaction>
</comment>
<comment type="catalytic activity">
    <reaction evidence="11 12">
        <text>5-O-(ADP-D-ribosyl)-L-glutamyl-[protein] + H2O = L-glutamyl-[protein] + ADP-D-ribose + H(+)</text>
        <dbReference type="Rhea" id="RHEA:58248"/>
        <dbReference type="Rhea" id="RHEA-COMP:10208"/>
        <dbReference type="Rhea" id="RHEA-COMP:15089"/>
        <dbReference type="ChEBI" id="CHEBI:15377"/>
        <dbReference type="ChEBI" id="CHEBI:15378"/>
        <dbReference type="ChEBI" id="CHEBI:29973"/>
        <dbReference type="ChEBI" id="CHEBI:57967"/>
        <dbReference type="ChEBI" id="CHEBI:142540"/>
    </reaction>
    <physiologicalReaction direction="left-to-right" evidence="11 12">
        <dbReference type="Rhea" id="RHEA:58249"/>
    </physiologicalReaction>
</comment>
<comment type="catalytic activity">
    <reaction evidence="13">
        <text>alpha-NAD(+) + H2O = ADP-D-ribose + nicotinamide + H(+)</text>
        <dbReference type="Rhea" id="RHEA:68792"/>
        <dbReference type="ChEBI" id="CHEBI:15377"/>
        <dbReference type="ChEBI" id="CHEBI:15378"/>
        <dbReference type="ChEBI" id="CHEBI:17154"/>
        <dbReference type="ChEBI" id="CHEBI:57967"/>
        <dbReference type="ChEBI" id="CHEBI:77017"/>
    </reaction>
</comment>
<comment type="activity regulation">
    <text evidence="10">Subject to competitive inhibition by the product ADP-ribose.</text>
</comment>
<comment type="biophysicochemical properties">
    <kinetics>
        <KM evidence="10">373 uM for O-acetyl-ADP-ribose</KM>
    </kinetics>
</comment>
<comment type="subunit">
    <text evidence="7 8">Interacts with ESR1; Interacts in a manner that is estrogen independent but is enhanced by estrogen. Interacts (via macro domain) with AR.</text>
</comment>
<comment type="interaction">
    <interactant intactId="EBI-5324932">
        <id>Q9BQ69</id>
    </interactant>
    <interactant intactId="EBI-78473">
        <id>P03372</id>
        <label>ESR1</label>
    </interactant>
    <organismsDiffer>false</organismsDiffer>
    <experiments>6</experiments>
</comment>
<comment type="interaction">
    <interactant intactId="EBI-5324932">
        <id>Q9BQ69</id>
    </interactant>
    <interactant intactId="EBI-358383">
        <id>P52294</id>
        <label>KPNA1</label>
    </interactant>
    <organismsDiffer>false</organismsDiffer>
    <experiments>3</experiments>
</comment>
<comment type="interaction">
    <interactant intactId="EBI-5324932">
        <id>Q9BQ69</id>
    </interactant>
    <interactant intactId="EBI-297888">
        <id>P05783</id>
        <label>KRT18</label>
    </interactant>
    <organismsDiffer>false</organismsDiffer>
    <experiments>7</experiments>
</comment>
<comment type="interaction">
    <interactant intactId="EBI-5324932">
        <id>Q9BQ69</id>
    </interactant>
    <interactant intactId="EBI-355676">
        <id>P09874</id>
        <label>PARP1</label>
    </interactant>
    <organismsDiffer>false</organismsDiffer>
    <experiments>3</experiments>
</comment>
<comment type="interaction">
    <interactant intactId="EBI-5324932">
        <id>Q9BQ69</id>
    </interactant>
    <interactant intactId="EBI-73886">
        <id>Q04206</id>
        <label>RELA</label>
    </interactant>
    <organismsDiffer>false</organismsDiffer>
    <experiments>7</experiments>
</comment>
<comment type="subcellular location">
    <subcellularLocation>
        <location evidence="11">Nucleus</location>
    </subcellularLocation>
    <text evidence="11">Recruited to DNA lesions, probably via mono-APD-ribosylated proteins.</text>
</comment>
<comment type="induction">
    <text evidence="4 6 8 9">Overexpressed by estrogens in breast cancer MCF-7 cells, probably via an activation of nuclear receptors for steroids (ESR1 but not ESR2). Significantly increased by estrogens in ESR1-positive Ishikawa endometrial cancer cells. Up-regulated in 17-beta-estradiol-responsive BG-1 ovarian cancer cells but down-regulated in estrogen-resistant SKOV3 ovarian cancer cells. Induced by androgen.</text>
</comment>
<comment type="disease">
    <text evidence="5">A chromosomal aberration involving MACROD1 is found in acute leukemia. Translocation t(11;21)(q13;q22) that forms a RUNX1-MACROD1 fusion protein.</text>
</comment>
<comment type="miscellaneous">
    <text evidence="4">Overexpression may promote MCF-7 cells proliferation. There is an approximate one-third increase of the invasive capacity of MACROD1-overexpressing cells. The expression of CDH1 is repressed by MACROD1. Further analysis demonstrates that MACROD1 inhibits CDH1 transactivation in a dose-dependent manner. Inhibition is abolished by estrogen deprivation, indicating that the down-regulation of CDH1 transcription by MACROD1 requires ESR1 mediation. Binding of ESR1 to the CDH1 promoter is antagonized by MACROD1, suggesting that MACROD1 could interfere with ESR1-mediated transcription. Knockdown of MACROD1 leads to impaired AR function and greatly attenuates the coactivation of AR by other AR coactivators such as UXT and NCOA1. This interference also markedly inhibits the androgen-stimulated proliferation of androgen-sensitive LNCaP prostate cancer cells. MACROD1 knockdown does not significantly affect the growth rate of AR-negative PC-3 prostate cancer cells.</text>
</comment>
<comment type="similarity">
    <text evidence="15">Belongs to the MacroD-type family. MacroD1/2-like subfamily.</text>
</comment>
<comment type="sequence caution" evidence="15">
    <conflict type="erroneous initiation">
        <sequence resource="EMBL-CDS" id="AAH03188"/>
    </conflict>
    <text>Truncated N-terminus.</text>
</comment>
<comment type="sequence caution" evidence="15">
    <conflict type="erroneous initiation">
        <sequence resource="EMBL-CDS" id="AAH03188"/>
    </conflict>
</comment>
<comment type="online information" name="Atlas of Genetics and Cytogenetics in Oncology and Haematology">
    <link uri="https://atlasgeneticsoncology.org/gene/50947/MACROD1"/>
</comment>
<organism>
    <name type="scientific">Homo sapiens</name>
    <name type="common">Human</name>
    <dbReference type="NCBI Taxonomy" id="9606"/>
    <lineage>
        <taxon>Eukaryota</taxon>
        <taxon>Metazoa</taxon>
        <taxon>Chordata</taxon>
        <taxon>Craniata</taxon>
        <taxon>Vertebrata</taxon>
        <taxon>Euteleostomi</taxon>
        <taxon>Mammalia</taxon>
        <taxon>Eutheria</taxon>
        <taxon>Euarchontoglires</taxon>
        <taxon>Primates</taxon>
        <taxon>Haplorrhini</taxon>
        <taxon>Catarrhini</taxon>
        <taxon>Hominidae</taxon>
        <taxon>Homo</taxon>
    </lineage>
</organism>
<accession>Q9BQ69</accession>
<accession>Q9UH96</accession>
<dbReference type="EC" id="3.1.1.106" evidence="16"/>
<dbReference type="EC" id="3.2.2.-" evidence="12 11"/>
<dbReference type="EMBL" id="AF202922">
    <property type="protein sequence ID" value="AAF15294.2"/>
    <property type="molecule type" value="mRNA"/>
</dbReference>
<dbReference type="EMBL" id="BC000270">
    <property type="protein sequence ID" value="AAH00270.2"/>
    <property type="molecule type" value="mRNA"/>
</dbReference>
<dbReference type="EMBL" id="BC003188">
    <property type="protein sequence ID" value="AAH03188.1"/>
    <property type="status" value="ALT_INIT"/>
    <property type="molecule type" value="mRNA"/>
</dbReference>
<dbReference type="EMBL" id="BC007297">
    <property type="protein sequence ID" value="AAH07297.1"/>
    <property type="molecule type" value="mRNA"/>
</dbReference>
<dbReference type="EMBL" id="BC008316">
    <property type="protein sequence ID" value="AAH08316.1"/>
    <property type="molecule type" value="mRNA"/>
</dbReference>
<dbReference type="CCDS" id="CCDS8056.1"/>
<dbReference type="RefSeq" id="NP_054786.2">
    <property type="nucleotide sequence ID" value="NM_014067.3"/>
</dbReference>
<dbReference type="PDB" id="2X47">
    <property type="method" value="X-ray"/>
    <property type="resolution" value="1.70 A"/>
    <property type="chains" value="A=91-325"/>
</dbReference>
<dbReference type="PDB" id="6LH4">
    <property type="method" value="X-ray"/>
    <property type="resolution" value="2.00 A"/>
    <property type="chains" value="A/B/C/D=91-325"/>
</dbReference>
<dbReference type="PDBsum" id="2X47"/>
<dbReference type="PDBsum" id="6LH4"/>
<dbReference type="SMR" id="Q9BQ69"/>
<dbReference type="BioGRID" id="118813">
    <property type="interactions" value="60"/>
</dbReference>
<dbReference type="FunCoup" id="Q9BQ69">
    <property type="interactions" value="1015"/>
</dbReference>
<dbReference type="IntAct" id="Q9BQ69">
    <property type="interactions" value="31"/>
</dbReference>
<dbReference type="STRING" id="9606.ENSP00000255681"/>
<dbReference type="BindingDB" id="Q9BQ69"/>
<dbReference type="ChEMBL" id="CHEMBL4295934"/>
<dbReference type="GlyGen" id="Q9BQ69">
    <property type="glycosylation" value="2 sites, 2 O-linked glycans (2 sites)"/>
</dbReference>
<dbReference type="iPTMnet" id="Q9BQ69"/>
<dbReference type="PhosphoSitePlus" id="Q9BQ69"/>
<dbReference type="SwissPalm" id="Q9BQ69"/>
<dbReference type="BioMuta" id="MACROD1"/>
<dbReference type="DMDM" id="32129719"/>
<dbReference type="jPOST" id="Q9BQ69"/>
<dbReference type="MassIVE" id="Q9BQ69"/>
<dbReference type="PaxDb" id="9606-ENSP00000255681"/>
<dbReference type="PeptideAtlas" id="Q9BQ69"/>
<dbReference type="ProteomicsDB" id="78637"/>
<dbReference type="Pumba" id="Q9BQ69"/>
<dbReference type="Antibodypedia" id="51757">
    <property type="antibodies" value="50 antibodies from 11 providers"/>
</dbReference>
<dbReference type="DNASU" id="28992"/>
<dbReference type="Ensembl" id="ENST00000255681.7">
    <property type="protein sequence ID" value="ENSP00000255681.6"/>
    <property type="gene ID" value="ENSG00000133315.12"/>
</dbReference>
<dbReference type="GeneID" id="28992"/>
<dbReference type="KEGG" id="hsa:28992"/>
<dbReference type="MANE-Select" id="ENST00000255681.7">
    <property type="protein sequence ID" value="ENSP00000255681.6"/>
    <property type="RefSeq nucleotide sequence ID" value="NM_014067.4"/>
    <property type="RefSeq protein sequence ID" value="NP_054786.2"/>
</dbReference>
<dbReference type="UCSC" id="uc001nyh.4">
    <property type="organism name" value="human"/>
</dbReference>
<dbReference type="AGR" id="HGNC:29598"/>
<dbReference type="CTD" id="28992"/>
<dbReference type="DisGeNET" id="28992"/>
<dbReference type="GeneCards" id="MACROD1"/>
<dbReference type="HGNC" id="HGNC:29598">
    <property type="gene designation" value="MACROD1"/>
</dbReference>
<dbReference type="HPA" id="ENSG00000133315">
    <property type="expression patterns" value="Tissue enhanced (skeletal)"/>
</dbReference>
<dbReference type="MIM" id="610400">
    <property type="type" value="gene"/>
</dbReference>
<dbReference type="neXtProt" id="NX_Q9BQ69"/>
<dbReference type="OpenTargets" id="ENSG00000133315"/>
<dbReference type="PharmGKB" id="PA162394816"/>
<dbReference type="VEuPathDB" id="HostDB:ENSG00000133315"/>
<dbReference type="eggNOG" id="KOG2633">
    <property type="taxonomic scope" value="Eukaryota"/>
</dbReference>
<dbReference type="GeneTree" id="ENSGT00940000161450"/>
<dbReference type="HOGENOM" id="CLU_046550_4_1_1"/>
<dbReference type="InParanoid" id="Q9BQ69"/>
<dbReference type="OMA" id="GYPNENA"/>
<dbReference type="OrthoDB" id="6133115at2759"/>
<dbReference type="PAN-GO" id="Q9BQ69">
    <property type="GO annotations" value="5 GO annotations based on evolutionary models"/>
</dbReference>
<dbReference type="PhylomeDB" id="Q9BQ69"/>
<dbReference type="TreeFam" id="TF341440"/>
<dbReference type="BRENDA" id="3.1.1.106">
    <property type="organism ID" value="2681"/>
</dbReference>
<dbReference type="PathwayCommons" id="Q9BQ69"/>
<dbReference type="SignaLink" id="Q9BQ69"/>
<dbReference type="BioGRID-ORCS" id="28992">
    <property type="hits" value="17 hits in 1163 CRISPR screens"/>
</dbReference>
<dbReference type="CD-CODE" id="FB4E32DD">
    <property type="entry name" value="Presynaptic clusters and postsynaptic densities"/>
</dbReference>
<dbReference type="ChiTaRS" id="MACROD1">
    <property type="organism name" value="human"/>
</dbReference>
<dbReference type="EvolutionaryTrace" id="Q9BQ69"/>
<dbReference type="GenomeRNAi" id="28992"/>
<dbReference type="Pharos" id="Q9BQ69">
    <property type="development level" value="Tchem"/>
</dbReference>
<dbReference type="PRO" id="PR:Q9BQ69"/>
<dbReference type="Proteomes" id="UP000005640">
    <property type="component" value="Chromosome 11"/>
</dbReference>
<dbReference type="RNAct" id="Q9BQ69">
    <property type="molecule type" value="protein"/>
</dbReference>
<dbReference type="Bgee" id="ENSG00000133315">
    <property type="expression patterns" value="Expressed in hindlimb stylopod muscle and 168 other cell types or tissues"/>
</dbReference>
<dbReference type="ExpressionAtlas" id="Q9BQ69">
    <property type="expression patterns" value="baseline and differential"/>
</dbReference>
<dbReference type="GO" id="GO:0005739">
    <property type="term" value="C:mitochondrion"/>
    <property type="evidence" value="ECO:0006056"/>
    <property type="project" value="FlyBase"/>
</dbReference>
<dbReference type="GO" id="GO:0005654">
    <property type="term" value="C:nucleoplasm"/>
    <property type="evidence" value="ECO:0000314"/>
    <property type="project" value="HPA"/>
</dbReference>
<dbReference type="GO" id="GO:0005634">
    <property type="term" value="C:nucleus"/>
    <property type="evidence" value="ECO:0000314"/>
    <property type="project" value="UniProtKB"/>
</dbReference>
<dbReference type="GO" id="GO:0140293">
    <property type="term" value="F:ADP-ribosylglutamate hydrolase activity"/>
    <property type="evidence" value="ECO:0000314"/>
    <property type="project" value="UniProtKB"/>
</dbReference>
<dbReference type="GO" id="GO:0019213">
    <property type="term" value="F:deacetylase activity"/>
    <property type="evidence" value="ECO:0000314"/>
    <property type="project" value="UniProtKB"/>
</dbReference>
<dbReference type="GO" id="GO:0016798">
    <property type="term" value="F:hydrolase activity, acting on glycosyl bonds"/>
    <property type="evidence" value="ECO:0000314"/>
    <property type="project" value="UniProtKB"/>
</dbReference>
<dbReference type="GO" id="GO:0061463">
    <property type="term" value="F:O-acetyl-ADP-ribose deacetylase activity"/>
    <property type="evidence" value="ECO:0007669"/>
    <property type="project" value="UniProtKB-EC"/>
</dbReference>
<dbReference type="GO" id="GO:0006974">
    <property type="term" value="P:DNA damage response"/>
    <property type="evidence" value="ECO:0000315"/>
    <property type="project" value="UniProtKB"/>
</dbReference>
<dbReference type="GO" id="GO:0140291">
    <property type="term" value="P:peptidyl-glutamate ADP-deribosylation"/>
    <property type="evidence" value="ECO:0000314"/>
    <property type="project" value="UniProtKB"/>
</dbReference>
<dbReference type="GO" id="GO:0051725">
    <property type="term" value="P:protein de-ADP-ribosylation"/>
    <property type="evidence" value="ECO:0000314"/>
    <property type="project" value="UniProtKB"/>
</dbReference>
<dbReference type="GO" id="GO:0042278">
    <property type="term" value="P:purine nucleoside metabolic process"/>
    <property type="evidence" value="ECO:0000314"/>
    <property type="project" value="UniProtKB"/>
</dbReference>
<dbReference type="CDD" id="cd02908">
    <property type="entry name" value="Macro_OAADPr_deacetylase"/>
    <property type="match status" value="1"/>
</dbReference>
<dbReference type="FunFam" id="3.40.220.10:FF:000003">
    <property type="entry name" value="O-acetyl-ADP-ribose deacetylase MACROD2"/>
    <property type="match status" value="1"/>
</dbReference>
<dbReference type="Gene3D" id="3.40.220.10">
    <property type="entry name" value="Leucine Aminopeptidase, subunit E, domain 1"/>
    <property type="match status" value="1"/>
</dbReference>
<dbReference type="InterPro" id="IPR002589">
    <property type="entry name" value="Macro_dom"/>
</dbReference>
<dbReference type="InterPro" id="IPR043472">
    <property type="entry name" value="Macro_dom-like"/>
</dbReference>
<dbReference type="NCBIfam" id="NF001664">
    <property type="entry name" value="PRK00431.1-6"/>
    <property type="match status" value="1"/>
</dbReference>
<dbReference type="PANTHER" id="PTHR11106:SF93">
    <property type="entry name" value="ADP-RIBOSE GLYCOHYDROLASE MACROD1"/>
    <property type="match status" value="1"/>
</dbReference>
<dbReference type="PANTHER" id="PTHR11106">
    <property type="entry name" value="GANGLIOSIDE INDUCED DIFFERENTIATION ASSOCIATED PROTEIN 2-RELATED"/>
    <property type="match status" value="1"/>
</dbReference>
<dbReference type="Pfam" id="PF01661">
    <property type="entry name" value="Macro"/>
    <property type="match status" value="1"/>
</dbReference>
<dbReference type="SMART" id="SM00506">
    <property type="entry name" value="A1pp"/>
    <property type="match status" value="1"/>
</dbReference>
<dbReference type="SUPFAM" id="SSF52949">
    <property type="entry name" value="Macro domain-like"/>
    <property type="match status" value="1"/>
</dbReference>
<dbReference type="PROSITE" id="PS51154">
    <property type="entry name" value="MACRO"/>
    <property type="match status" value="1"/>
</dbReference>
<protein>
    <recommendedName>
        <fullName evidence="15">ADP-ribose glycohydrolase MACROD1</fullName>
    </recommendedName>
    <alternativeName>
        <fullName evidence="14">MACRO domain-containing protein 1</fullName>
    </alternativeName>
    <alternativeName>
        <fullName>O-acetyl-ADP-ribose deacetylase MACROD1</fullName>
        <ecNumber evidence="16">3.1.1.106</ecNumber>
    </alternativeName>
    <alternativeName>
        <fullName>Protein LRP16</fullName>
    </alternativeName>
    <alternativeName>
        <fullName evidence="15">[Protein ADP-ribosylaspartate] hydrolase MACROD1</fullName>
        <ecNumber evidence="12">3.2.2.-</ecNumber>
    </alternativeName>
    <alternativeName>
        <fullName evidence="15">[Protein ADP-ribosylglutamate] hydrolase MACROD1</fullName>
        <ecNumber evidence="11 12">3.2.2.-</ecNumber>
    </alternativeName>
</protein>
<proteinExistence type="evidence at protein level"/>
<keyword id="KW-0002">3D-structure</keyword>
<keyword id="KW-0007">Acetylation</keyword>
<keyword id="KW-0160">Chromosomal rearrangement</keyword>
<keyword id="KW-0227">DNA damage</keyword>
<keyword id="KW-0378">Hydrolase</keyword>
<keyword id="KW-1017">Isopeptide bond</keyword>
<keyword id="KW-0539">Nucleus</keyword>
<keyword id="KW-1267">Proteomics identification</keyword>
<keyword id="KW-1185">Reference proteome</keyword>
<keyword id="KW-0832">Ubl conjugation</keyword>
<name>MACD1_HUMAN</name>
<sequence length="325" mass="35505">MSLQSRLSGRLAQLRAAGQLLVPPRPRPGHLAGATRTRSSTCGPPAFLGVFGRRARTSAGVGAWGAAAVGRTAGVRTWAPLAMAAKVDLSTSTDWKEAKSFLKGLSDKQREEHYFCKDFVRLKKIPTWKEMAKGVAVKVEEPRYKKDKQLNEKISLLRSDITKLEVDAIVNAANSSLLGGGGVDGCIHRAAGPLLTDECRTLQSCKTGKAKITGGYRLPAKYVIHTVGPIAYGEPSASQAAELRSCYLSSLDLLLEHRLRSVAFPCISTGVFGYPCEAAAEIVLATLREWLEQHKDKVDRLIICVFLEKDEDIYRSRLPHYFPVA</sequence>
<feature type="chain" id="PRO_0000084485" description="ADP-ribose glycohydrolase MACROD1">
    <location>
        <begin position="1"/>
        <end position="325"/>
    </location>
</feature>
<feature type="domain" description="Macro" evidence="3">
    <location>
        <begin position="141"/>
        <end position="322"/>
    </location>
</feature>
<feature type="binding site" evidence="1">
    <location>
        <begin position="159"/>
        <end position="161"/>
    </location>
    <ligand>
        <name>substrate</name>
    </ligand>
</feature>
<feature type="binding site" evidence="1">
    <location>
        <begin position="172"/>
        <end position="174"/>
    </location>
    <ligand>
        <name>substrate</name>
    </ligand>
</feature>
<feature type="binding site" evidence="1">
    <location>
        <begin position="179"/>
        <end position="184"/>
    </location>
    <ligand>
        <name>substrate</name>
    </ligand>
</feature>
<feature type="binding site" evidence="1">
    <location>
        <begin position="267"/>
        <end position="273"/>
    </location>
    <ligand>
        <name>substrate</name>
    </ligand>
</feature>
<feature type="binding site" evidence="1">
    <location>
        <position position="306"/>
    </location>
    <ligand>
        <name>substrate</name>
    </ligand>
</feature>
<feature type="site" description="Breakpoint for translocation to form RUNX1-MACROD1" evidence="5">
    <location>
        <position position="100"/>
    </location>
</feature>
<feature type="modified residue" description="N6-succinyllysine" evidence="2">
    <location>
        <position position="96"/>
    </location>
</feature>
<feature type="modified residue" description="N6-succinyllysine" evidence="2">
    <location>
        <position position="103"/>
    </location>
</feature>
<feature type="modified residue" description="N6-succinyllysine" evidence="2">
    <location>
        <position position="129"/>
    </location>
</feature>
<feature type="modified residue" description="N6-acetyllysine" evidence="2">
    <location>
        <position position="163"/>
    </location>
</feature>
<feature type="cross-link" description="Glycyl lysine isopeptide (Lys-Gly) (interchain with G-Cter in SUMO2)" evidence="18">
    <location>
        <position position="138"/>
    </location>
</feature>
<feature type="mutagenesis site" description="Reduced enzyme activity." evidence="10">
    <original>D</original>
    <variation>A</variation>
    <location>
        <position position="160"/>
    </location>
</feature>
<feature type="mutagenesis site" description="Reduced enzyme activity." evidence="10">
    <original>D</original>
    <variation>A</variation>
    <location>
        <position position="167"/>
    </location>
</feature>
<feature type="mutagenesis site" description="Reduced enzyme activity. No significant effect on affinity for substrate." evidence="10">
    <original>N</original>
    <variation>A</variation>
    <location>
        <position position="171"/>
    </location>
</feature>
<feature type="mutagenesis site" description="Slightly reduced ADP-ribosyl hydrolase activity; when associated with A-184. Reduces O-acetyl-ADP-ribose deacetylase activity by 93%; when associated with A-184. No significant effect on affinity for substrate." evidence="10 11">
    <original>N</original>
    <variation>A</variation>
    <location>
        <position position="174"/>
    </location>
</feature>
<feature type="mutagenesis site" description="Slightly reduced ADP-ribosyl hydrolase activity; when associated with A-174. Reduces O-acetyl-ADP-ribose deacetylase activity by 93%; when associated with A-174. No significant effect on affinity for substrate." evidence="10 11 12">
    <original>D</original>
    <variation>A</variation>
    <location>
        <position position="184"/>
    </location>
</feature>
<feature type="mutagenesis site" description="Reduced enzyme activity." evidence="10 12">
    <original>H</original>
    <variation>A</variation>
    <location>
        <position position="188"/>
    </location>
</feature>
<feature type="mutagenesis site" description="No significant effect on enzyme activity." evidence="10">
    <original>S</original>
    <variation>A</variation>
    <location>
        <position position="268"/>
    </location>
</feature>
<feature type="mutagenesis site" description="Loss of enzyme activity." evidence="10 11">
    <original>G</original>
    <variation>E</variation>
    <location>
        <position position="270"/>
    </location>
</feature>
<feature type="helix" evidence="19">
    <location>
        <begin position="94"/>
        <end position="103"/>
    </location>
</feature>
<feature type="helix" evidence="19">
    <location>
        <begin position="107"/>
        <end position="110"/>
    </location>
</feature>
<feature type="helix" evidence="19">
    <location>
        <begin position="111"/>
        <end position="113"/>
    </location>
</feature>
<feature type="helix" evidence="19">
    <location>
        <begin position="122"/>
        <end position="124"/>
    </location>
</feature>
<feature type="helix" evidence="19">
    <location>
        <begin position="128"/>
        <end position="132"/>
    </location>
</feature>
<feature type="helix" evidence="19">
    <location>
        <begin position="148"/>
        <end position="151"/>
    </location>
</feature>
<feature type="strand" evidence="19">
    <location>
        <begin position="154"/>
        <end position="159"/>
    </location>
</feature>
<feature type="helix" evidence="19">
    <location>
        <begin position="161"/>
        <end position="163"/>
    </location>
</feature>
<feature type="strand" evidence="19">
    <location>
        <begin position="164"/>
        <end position="172"/>
    </location>
</feature>
<feature type="helix" evidence="19">
    <location>
        <begin position="182"/>
        <end position="191"/>
    </location>
</feature>
<feature type="helix" evidence="19">
    <location>
        <begin position="193"/>
        <end position="200"/>
    </location>
</feature>
<feature type="strand" evidence="19">
    <location>
        <begin position="210"/>
        <end position="214"/>
    </location>
</feature>
<feature type="strand" evidence="19">
    <location>
        <begin position="218"/>
        <end position="227"/>
    </location>
</feature>
<feature type="helix" evidence="19">
    <location>
        <begin position="237"/>
        <end position="256"/>
    </location>
</feature>
<feature type="strand" evidence="19">
    <location>
        <begin position="261"/>
        <end position="264"/>
    </location>
</feature>
<feature type="helix" evidence="19">
    <location>
        <begin position="276"/>
        <end position="294"/>
    </location>
</feature>
<feature type="helix" evidence="19">
    <location>
        <begin position="295"/>
        <end position="297"/>
    </location>
</feature>
<feature type="strand" evidence="19">
    <location>
        <begin position="299"/>
        <end position="305"/>
    </location>
</feature>
<feature type="helix" evidence="19">
    <location>
        <begin position="308"/>
        <end position="321"/>
    </location>
</feature>
<gene>
    <name evidence="14 17" type="primary">MACROD1</name>
    <name type="synonym">LRP16</name>
</gene>